<protein>
    <recommendedName>
        <fullName evidence="1">Glycine--tRNA ligase</fullName>
        <ecNumber evidence="1">6.1.1.14</ecNumber>
    </recommendedName>
    <alternativeName>
        <fullName evidence="1">Glycyl-tRNA synthetase</fullName>
        <shortName evidence="1">GlyRS</shortName>
    </alternativeName>
</protein>
<evidence type="ECO:0000255" key="1">
    <source>
        <dbReference type="HAMAP-Rule" id="MF_00253"/>
    </source>
</evidence>
<feature type="chain" id="PRO_1000047383" description="Glycine--tRNA ligase">
    <location>
        <begin position="1"/>
        <end position="463"/>
    </location>
</feature>
<feature type="binding site" evidence="1">
    <location>
        <position position="98"/>
    </location>
    <ligand>
        <name>substrate</name>
    </ligand>
</feature>
<feature type="binding site" evidence="1">
    <location>
        <position position="174"/>
    </location>
    <ligand>
        <name>substrate</name>
    </ligand>
</feature>
<feature type="binding site" evidence="1">
    <location>
        <begin position="206"/>
        <end position="208"/>
    </location>
    <ligand>
        <name>ATP</name>
        <dbReference type="ChEBI" id="CHEBI:30616"/>
    </ligand>
</feature>
<feature type="binding site" evidence="1">
    <location>
        <begin position="216"/>
        <end position="221"/>
    </location>
    <ligand>
        <name>ATP</name>
        <dbReference type="ChEBI" id="CHEBI:30616"/>
    </ligand>
</feature>
<feature type="binding site" evidence="1">
    <location>
        <begin position="221"/>
        <end position="225"/>
    </location>
    <ligand>
        <name>substrate</name>
    </ligand>
</feature>
<feature type="binding site" evidence="1">
    <location>
        <begin position="290"/>
        <end position="291"/>
    </location>
    <ligand>
        <name>ATP</name>
        <dbReference type="ChEBI" id="CHEBI:30616"/>
    </ligand>
</feature>
<feature type="binding site" evidence="1">
    <location>
        <begin position="330"/>
        <end position="334"/>
    </location>
    <ligand>
        <name>substrate</name>
    </ligand>
</feature>
<feature type="binding site" evidence="1">
    <location>
        <begin position="334"/>
        <end position="337"/>
    </location>
    <ligand>
        <name>ATP</name>
        <dbReference type="ChEBI" id="CHEBI:30616"/>
    </ligand>
</feature>
<organism>
    <name type="scientific">Staphylococcus aureus (strain Mu3 / ATCC 700698)</name>
    <dbReference type="NCBI Taxonomy" id="418127"/>
    <lineage>
        <taxon>Bacteria</taxon>
        <taxon>Bacillati</taxon>
        <taxon>Bacillota</taxon>
        <taxon>Bacilli</taxon>
        <taxon>Bacillales</taxon>
        <taxon>Staphylococcaceae</taxon>
        <taxon>Staphylococcus</taxon>
    </lineage>
</organism>
<proteinExistence type="inferred from homology"/>
<reference key="1">
    <citation type="journal article" date="2008" name="Antimicrob. Agents Chemother.">
        <title>Mutated response regulator graR is responsible for phenotypic conversion of Staphylococcus aureus from heterogeneous vancomycin-intermediate resistance to vancomycin-intermediate resistance.</title>
        <authorList>
            <person name="Neoh H.-M."/>
            <person name="Cui L."/>
            <person name="Yuzawa H."/>
            <person name="Takeuchi F."/>
            <person name="Matsuo M."/>
            <person name="Hiramatsu K."/>
        </authorList>
    </citation>
    <scope>NUCLEOTIDE SEQUENCE [LARGE SCALE GENOMIC DNA]</scope>
    <source>
        <strain>Mu3 / ATCC 700698</strain>
    </source>
</reference>
<comment type="function">
    <text evidence="1">Catalyzes the attachment of glycine to tRNA(Gly).</text>
</comment>
<comment type="catalytic activity">
    <reaction evidence="1">
        <text>tRNA(Gly) + glycine + ATP = glycyl-tRNA(Gly) + AMP + diphosphate</text>
        <dbReference type="Rhea" id="RHEA:16013"/>
        <dbReference type="Rhea" id="RHEA-COMP:9664"/>
        <dbReference type="Rhea" id="RHEA-COMP:9683"/>
        <dbReference type="ChEBI" id="CHEBI:30616"/>
        <dbReference type="ChEBI" id="CHEBI:33019"/>
        <dbReference type="ChEBI" id="CHEBI:57305"/>
        <dbReference type="ChEBI" id="CHEBI:78442"/>
        <dbReference type="ChEBI" id="CHEBI:78522"/>
        <dbReference type="ChEBI" id="CHEBI:456215"/>
        <dbReference type="EC" id="6.1.1.14"/>
    </reaction>
</comment>
<comment type="subunit">
    <text evidence="1">Homodimer.</text>
</comment>
<comment type="subcellular location">
    <subcellularLocation>
        <location evidence="1">Cytoplasm</location>
    </subcellularLocation>
</comment>
<comment type="similarity">
    <text evidence="1">Belongs to the class-II aminoacyl-tRNA synthetase family.</text>
</comment>
<gene>
    <name evidence="1" type="primary">glyQS</name>
    <name type="ordered locus">SAHV_1552</name>
</gene>
<sequence>MAKDMDTIVSLAKHRGFVFPGSDIYGGLSNTWDYGPLGVELKNNVKKAWWQKFITQSPFNVGIDAAILMNPKVWEASGHLNNFNDPMIDNKDSKIRYRADKLIEDYMQDVKGDENFIADGLSFEQMKKIIDDEGIVCPVSKTANWTEIRQFNLMFKTFQGVTEDSTNEIFLRPETAQGIFVNYKNVQRSMRKKLPFGIGQIGKSFRNEITPGNFIFRTREFEQMELEFFCKPGEEIEWQNYWKTFASDWLTSLNMSSENMRLRDHDEDELSHYSNATTDIEYKFPFGWGELWGIASRTDFDLRKHAEHSGEDFRYHDPETNEKYIPYCIEPSLGADRVTLAFLCDAYDEEGVEGSKDARTVLHFHPALAPYKAAILPLSKKLSGEAIKIFEQLSSKFSIDFDESQSIGKRYRRQDEIGTPYCVTFDFDSLEDNQVTVRDRDSMEQVRMPISELEAFLTEKTKF</sequence>
<keyword id="KW-0030">Aminoacyl-tRNA synthetase</keyword>
<keyword id="KW-0067">ATP-binding</keyword>
<keyword id="KW-0963">Cytoplasm</keyword>
<keyword id="KW-0436">Ligase</keyword>
<keyword id="KW-0547">Nucleotide-binding</keyword>
<keyword id="KW-0648">Protein biosynthesis</keyword>
<dbReference type="EC" id="6.1.1.14" evidence="1"/>
<dbReference type="EMBL" id="AP009324">
    <property type="protein sequence ID" value="BAF78435.1"/>
    <property type="molecule type" value="Genomic_DNA"/>
</dbReference>
<dbReference type="RefSeq" id="WP_001030080.1">
    <property type="nucleotide sequence ID" value="NC_009782.1"/>
</dbReference>
<dbReference type="SMR" id="A7X2W2"/>
<dbReference type="KEGG" id="saw:SAHV_1552"/>
<dbReference type="HOGENOM" id="CLU_015515_2_1_9"/>
<dbReference type="GO" id="GO:0005737">
    <property type="term" value="C:cytoplasm"/>
    <property type="evidence" value="ECO:0007669"/>
    <property type="project" value="UniProtKB-SubCell"/>
</dbReference>
<dbReference type="GO" id="GO:0005524">
    <property type="term" value="F:ATP binding"/>
    <property type="evidence" value="ECO:0007669"/>
    <property type="project" value="UniProtKB-UniRule"/>
</dbReference>
<dbReference type="GO" id="GO:0140096">
    <property type="term" value="F:catalytic activity, acting on a protein"/>
    <property type="evidence" value="ECO:0007669"/>
    <property type="project" value="UniProtKB-ARBA"/>
</dbReference>
<dbReference type="GO" id="GO:0004820">
    <property type="term" value="F:glycine-tRNA ligase activity"/>
    <property type="evidence" value="ECO:0000250"/>
    <property type="project" value="UniProtKB"/>
</dbReference>
<dbReference type="GO" id="GO:0046983">
    <property type="term" value="F:protein dimerization activity"/>
    <property type="evidence" value="ECO:0000250"/>
    <property type="project" value="UniProtKB"/>
</dbReference>
<dbReference type="GO" id="GO:0016740">
    <property type="term" value="F:transferase activity"/>
    <property type="evidence" value="ECO:0007669"/>
    <property type="project" value="UniProtKB-ARBA"/>
</dbReference>
<dbReference type="GO" id="GO:0006426">
    <property type="term" value="P:glycyl-tRNA aminoacylation"/>
    <property type="evidence" value="ECO:0007669"/>
    <property type="project" value="UniProtKB-UniRule"/>
</dbReference>
<dbReference type="CDD" id="cd00774">
    <property type="entry name" value="GlyRS-like_core"/>
    <property type="match status" value="1"/>
</dbReference>
<dbReference type="CDD" id="cd00858">
    <property type="entry name" value="GlyRS_anticodon"/>
    <property type="match status" value="1"/>
</dbReference>
<dbReference type="FunFam" id="3.40.50.800:FF:000002">
    <property type="entry name" value="Glycine--tRNA ligase"/>
    <property type="match status" value="1"/>
</dbReference>
<dbReference type="Gene3D" id="3.30.40.230">
    <property type="match status" value="1"/>
</dbReference>
<dbReference type="Gene3D" id="3.40.50.800">
    <property type="entry name" value="Anticodon-binding domain"/>
    <property type="match status" value="1"/>
</dbReference>
<dbReference type="Gene3D" id="3.30.930.10">
    <property type="entry name" value="Bira Bifunctional Protein, Domain 2"/>
    <property type="match status" value="1"/>
</dbReference>
<dbReference type="HAMAP" id="MF_00253_B">
    <property type="entry name" value="Gly_tRNA_synth_B"/>
    <property type="match status" value="1"/>
</dbReference>
<dbReference type="InterPro" id="IPR002314">
    <property type="entry name" value="aa-tRNA-synt_IIb"/>
</dbReference>
<dbReference type="InterPro" id="IPR006195">
    <property type="entry name" value="aa-tRNA-synth_II"/>
</dbReference>
<dbReference type="InterPro" id="IPR045864">
    <property type="entry name" value="aa-tRNA-synth_II/BPL/LPL"/>
</dbReference>
<dbReference type="InterPro" id="IPR004154">
    <property type="entry name" value="Anticodon-bd"/>
</dbReference>
<dbReference type="InterPro" id="IPR036621">
    <property type="entry name" value="Anticodon-bd_dom_sf"/>
</dbReference>
<dbReference type="InterPro" id="IPR027031">
    <property type="entry name" value="Gly-tRNA_synthase/POLG2"/>
</dbReference>
<dbReference type="InterPro" id="IPR022961">
    <property type="entry name" value="Gly_tRNA_ligase_bac"/>
</dbReference>
<dbReference type="InterPro" id="IPR033731">
    <property type="entry name" value="GlyRS-like_core"/>
</dbReference>
<dbReference type="InterPro" id="IPR002315">
    <property type="entry name" value="tRNA-synt_gly"/>
</dbReference>
<dbReference type="NCBIfam" id="TIGR00389">
    <property type="entry name" value="glyS_dimeric"/>
    <property type="match status" value="1"/>
</dbReference>
<dbReference type="NCBIfam" id="NF003211">
    <property type="entry name" value="PRK04173.1"/>
    <property type="match status" value="1"/>
</dbReference>
<dbReference type="PANTHER" id="PTHR10745:SF8">
    <property type="entry name" value="DNA POLYMERASE SUBUNIT GAMMA-2, MITOCHONDRIAL"/>
    <property type="match status" value="1"/>
</dbReference>
<dbReference type="PANTHER" id="PTHR10745">
    <property type="entry name" value="GLYCYL-TRNA SYNTHETASE/DNA POLYMERASE SUBUNIT GAMMA-2"/>
    <property type="match status" value="1"/>
</dbReference>
<dbReference type="Pfam" id="PF03129">
    <property type="entry name" value="HGTP_anticodon"/>
    <property type="match status" value="1"/>
</dbReference>
<dbReference type="Pfam" id="PF00587">
    <property type="entry name" value="tRNA-synt_2b"/>
    <property type="match status" value="1"/>
</dbReference>
<dbReference type="PRINTS" id="PR01043">
    <property type="entry name" value="TRNASYNTHGLY"/>
</dbReference>
<dbReference type="SUPFAM" id="SSF52954">
    <property type="entry name" value="Class II aaRS ABD-related"/>
    <property type="match status" value="1"/>
</dbReference>
<dbReference type="SUPFAM" id="SSF55681">
    <property type="entry name" value="Class II aaRS and biotin synthetases"/>
    <property type="match status" value="1"/>
</dbReference>
<dbReference type="PROSITE" id="PS50862">
    <property type="entry name" value="AA_TRNA_LIGASE_II"/>
    <property type="match status" value="1"/>
</dbReference>
<name>SYG_STAA1</name>
<accession>A7X2W2</accession>